<feature type="chain" id="PRO_0000176455" description="Asparagine--tRNA ligase">
    <location>
        <begin position="1"/>
        <end position="430"/>
    </location>
</feature>
<name>SYN_STAHJ</name>
<accession>Q4L6F8</accession>
<evidence type="ECO:0000255" key="1">
    <source>
        <dbReference type="HAMAP-Rule" id="MF_00534"/>
    </source>
</evidence>
<dbReference type="EC" id="6.1.1.22" evidence="1"/>
<dbReference type="EMBL" id="AP006716">
    <property type="protein sequence ID" value="BAE04767.1"/>
    <property type="molecule type" value="Genomic_DNA"/>
</dbReference>
<dbReference type="RefSeq" id="WP_011275753.1">
    <property type="nucleotide sequence ID" value="NC_007168.1"/>
</dbReference>
<dbReference type="SMR" id="Q4L6F8"/>
<dbReference type="GeneID" id="93780852"/>
<dbReference type="KEGG" id="sha:SH1458"/>
<dbReference type="eggNOG" id="COG0017">
    <property type="taxonomic scope" value="Bacteria"/>
</dbReference>
<dbReference type="HOGENOM" id="CLU_004553_2_0_9"/>
<dbReference type="OrthoDB" id="9762036at2"/>
<dbReference type="Proteomes" id="UP000000543">
    <property type="component" value="Chromosome"/>
</dbReference>
<dbReference type="GO" id="GO:0005737">
    <property type="term" value="C:cytoplasm"/>
    <property type="evidence" value="ECO:0007669"/>
    <property type="project" value="UniProtKB-SubCell"/>
</dbReference>
<dbReference type="GO" id="GO:0004816">
    <property type="term" value="F:asparagine-tRNA ligase activity"/>
    <property type="evidence" value="ECO:0007669"/>
    <property type="project" value="UniProtKB-UniRule"/>
</dbReference>
<dbReference type="GO" id="GO:0005524">
    <property type="term" value="F:ATP binding"/>
    <property type="evidence" value="ECO:0007669"/>
    <property type="project" value="UniProtKB-UniRule"/>
</dbReference>
<dbReference type="GO" id="GO:0140096">
    <property type="term" value="F:catalytic activity, acting on a protein"/>
    <property type="evidence" value="ECO:0007669"/>
    <property type="project" value="UniProtKB-ARBA"/>
</dbReference>
<dbReference type="GO" id="GO:0003676">
    <property type="term" value="F:nucleic acid binding"/>
    <property type="evidence" value="ECO:0007669"/>
    <property type="project" value="InterPro"/>
</dbReference>
<dbReference type="GO" id="GO:0016740">
    <property type="term" value="F:transferase activity"/>
    <property type="evidence" value="ECO:0007669"/>
    <property type="project" value="UniProtKB-ARBA"/>
</dbReference>
<dbReference type="GO" id="GO:0006421">
    <property type="term" value="P:asparaginyl-tRNA aminoacylation"/>
    <property type="evidence" value="ECO:0007669"/>
    <property type="project" value="UniProtKB-UniRule"/>
</dbReference>
<dbReference type="CDD" id="cd04323">
    <property type="entry name" value="AsnRS_cyto_like_N"/>
    <property type="match status" value="1"/>
</dbReference>
<dbReference type="CDD" id="cd00776">
    <property type="entry name" value="AsxRS_core"/>
    <property type="match status" value="1"/>
</dbReference>
<dbReference type="Gene3D" id="3.30.930.10">
    <property type="entry name" value="Bira Bifunctional Protein, Domain 2"/>
    <property type="match status" value="1"/>
</dbReference>
<dbReference type="Gene3D" id="2.40.50.140">
    <property type="entry name" value="Nucleic acid-binding proteins"/>
    <property type="match status" value="1"/>
</dbReference>
<dbReference type="HAMAP" id="MF_00534">
    <property type="entry name" value="Asn_tRNA_synth"/>
    <property type="match status" value="1"/>
</dbReference>
<dbReference type="InterPro" id="IPR004364">
    <property type="entry name" value="Aa-tRNA-synt_II"/>
</dbReference>
<dbReference type="InterPro" id="IPR006195">
    <property type="entry name" value="aa-tRNA-synth_II"/>
</dbReference>
<dbReference type="InterPro" id="IPR045864">
    <property type="entry name" value="aa-tRNA-synth_II/BPL/LPL"/>
</dbReference>
<dbReference type="InterPro" id="IPR004522">
    <property type="entry name" value="Asn-tRNA-ligase"/>
</dbReference>
<dbReference type="InterPro" id="IPR002312">
    <property type="entry name" value="Asp/Asn-tRNA-synth_IIb"/>
</dbReference>
<dbReference type="InterPro" id="IPR012340">
    <property type="entry name" value="NA-bd_OB-fold"/>
</dbReference>
<dbReference type="InterPro" id="IPR004365">
    <property type="entry name" value="NA-bd_OB_tRNA"/>
</dbReference>
<dbReference type="NCBIfam" id="TIGR00457">
    <property type="entry name" value="asnS"/>
    <property type="match status" value="1"/>
</dbReference>
<dbReference type="NCBIfam" id="NF003037">
    <property type="entry name" value="PRK03932.1"/>
    <property type="match status" value="1"/>
</dbReference>
<dbReference type="NCBIfam" id="NF003483">
    <property type="entry name" value="PRK05159.1"/>
    <property type="match status" value="1"/>
</dbReference>
<dbReference type="PANTHER" id="PTHR22594:SF34">
    <property type="entry name" value="ASPARAGINE--TRNA LIGASE, MITOCHONDRIAL-RELATED"/>
    <property type="match status" value="1"/>
</dbReference>
<dbReference type="PANTHER" id="PTHR22594">
    <property type="entry name" value="ASPARTYL/LYSYL-TRNA SYNTHETASE"/>
    <property type="match status" value="1"/>
</dbReference>
<dbReference type="Pfam" id="PF00152">
    <property type="entry name" value="tRNA-synt_2"/>
    <property type="match status" value="1"/>
</dbReference>
<dbReference type="Pfam" id="PF01336">
    <property type="entry name" value="tRNA_anti-codon"/>
    <property type="match status" value="1"/>
</dbReference>
<dbReference type="PRINTS" id="PR01042">
    <property type="entry name" value="TRNASYNTHASP"/>
</dbReference>
<dbReference type="SUPFAM" id="SSF55681">
    <property type="entry name" value="Class II aaRS and biotin synthetases"/>
    <property type="match status" value="1"/>
</dbReference>
<dbReference type="SUPFAM" id="SSF50249">
    <property type="entry name" value="Nucleic acid-binding proteins"/>
    <property type="match status" value="1"/>
</dbReference>
<dbReference type="PROSITE" id="PS50862">
    <property type="entry name" value="AA_TRNA_LIGASE_II"/>
    <property type="match status" value="1"/>
</dbReference>
<proteinExistence type="inferred from homology"/>
<reference key="1">
    <citation type="journal article" date="2005" name="J. Bacteriol.">
        <title>Whole-genome sequencing of Staphylococcus haemolyticus uncovers the extreme plasticity of its genome and the evolution of human-colonizing staphylococcal species.</title>
        <authorList>
            <person name="Takeuchi F."/>
            <person name="Watanabe S."/>
            <person name="Baba T."/>
            <person name="Yuzawa H."/>
            <person name="Ito T."/>
            <person name="Morimoto Y."/>
            <person name="Kuroda M."/>
            <person name="Cui L."/>
            <person name="Takahashi M."/>
            <person name="Ankai A."/>
            <person name="Baba S."/>
            <person name="Fukui S."/>
            <person name="Lee J.C."/>
            <person name="Hiramatsu K."/>
        </authorList>
    </citation>
    <scope>NUCLEOTIDE SEQUENCE [LARGE SCALE GENOMIC DNA]</scope>
    <source>
        <strain>JCSC1435</strain>
    </source>
</reference>
<gene>
    <name evidence="1" type="primary">asnS</name>
    <name type="ordered locus">SH1458</name>
</gene>
<protein>
    <recommendedName>
        <fullName evidence="1">Asparagine--tRNA ligase</fullName>
        <ecNumber evidence="1">6.1.1.22</ecNumber>
    </recommendedName>
    <alternativeName>
        <fullName evidence="1">Asparaginyl-tRNA synthetase</fullName>
        <shortName evidence="1">AsnRS</shortName>
    </alternativeName>
</protein>
<comment type="catalytic activity">
    <reaction evidence="1">
        <text>tRNA(Asn) + L-asparagine + ATP = L-asparaginyl-tRNA(Asn) + AMP + diphosphate + H(+)</text>
        <dbReference type="Rhea" id="RHEA:11180"/>
        <dbReference type="Rhea" id="RHEA-COMP:9659"/>
        <dbReference type="Rhea" id="RHEA-COMP:9674"/>
        <dbReference type="ChEBI" id="CHEBI:15378"/>
        <dbReference type="ChEBI" id="CHEBI:30616"/>
        <dbReference type="ChEBI" id="CHEBI:33019"/>
        <dbReference type="ChEBI" id="CHEBI:58048"/>
        <dbReference type="ChEBI" id="CHEBI:78442"/>
        <dbReference type="ChEBI" id="CHEBI:78515"/>
        <dbReference type="ChEBI" id="CHEBI:456215"/>
        <dbReference type="EC" id="6.1.1.22"/>
    </reaction>
</comment>
<comment type="subunit">
    <text evidence="1">Homodimer.</text>
</comment>
<comment type="subcellular location">
    <subcellularLocation>
        <location evidence="1">Cytoplasm</location>
    </subcellularLocation>
</comment>
<comment type="similarity">
    <text evidence="1">Belongs to the class-II aminoacyl-tRNA synthetase family.</text>
</comment>
<organism>
    <name type="scientific">Staphylococcus haemolyticus (strain JCSC1435)</name>
    <dbReference type="NCBI Taxonomy" id="279808"/>
    <lineage>
        <taxon>Bacteria</taxon>
        <taxon>Bacillati</taxon>
        <taxon>Bacillota</taxon>
        <taxon>Bacilli</taxon>
        <taxon>Bacillales</taxon>
        <taxon>Staphylococcaceae</taxon>
        <taxon>Staphylococcus</taxon>
    </lineage>
</organism>
<keyword id="KW-0030">Aminoacyl-tRNA synthetase</keyword>
<keyword id="KW-0067">ATP-binding</keyword>
<keyword id="KW-0963">Cytoplasm</keyword>
<keyword id="KW-0436">Ligase</keyword>
<keyword id="KW-0547">Nucleotide-binding</keyword>
<keyword id="KW-0648">Protein biosynthesis</keyword>
<sequence length="430" mass="49333">MKTTIKQAKQHLNQEVTIGAWLTNKRSSGKIAFLQLRDGSGFMQGVVVKSEVSDETFQLAKEITQESSLYVTGVITEDNRSDLGYEMQVKSIEVIHEAHDYPITPKNHGTEFLMDHRHLWLRSKKQHAVMKIRNEIIRATYEFFNENGFTKIDPPILTASAPEGTSELFHTKYFDEDAFLSQSGQLYMEAAAMAHGRVFSFGPTFRAEKSKTRRHLIEFWMIEPEMAFTNHVESLEVQEQYVSHVVKSVLKNCQLELKALDRDTSKLEKVSAPFPRISYDDAIKFLKEEGFNDIEWGEDFGAPHETAIANHYDLPVFITNYPTKIKPFYMQPNPENEETVLCADLIAPEGYGEIIGGSERINDLELLEQRIDEHQLDAESYNYYLDLRRYGSVPHSGFGLGLERTVAWISGVEHVRETAPFPRLLNRLYP</sequence>